<organism>
    <name type="scientific">Pseudomonas syringae pv. syringae</name>
    <dbReference type="NCBI Taxonomy" id="321"/>
    <lineage>
        <taxon>Bacteria</taxon>
        <taxon>Pseudomonadati</taxon>
        <taxon>Pseudomonadota</taxon>
        <taxon>Gammaproteobacteria</taxon>
        <taxon>Pseudomonadales</taxon>
        <taxon>Pseudomonadaceae</taxon>
        <taxon>Pseudomonas</taxon>
        <taxon>Pseudomonas syringae</taxon>
    </lineage>
</organism>
<dbReference type="EMBL" id="U03854">
    <property type="protein sequence ID" value="AAA17652.1"/>
    <property type="molecule type" value="Unassigned_DNA"/>
</dbReference>
<dbReference type="PIR" id="C49889">
    <property type="entry name" value="C49889"/>
</dbReference>
<dbReference type="RefSeq" id="WP_003365122.1">
    <property type="nucleotide sequence ID" value="NZ_MLEV01000001.1"/>
</dbReference>
<dbReference type="SMR" id="P37929"/>
<dbReference type="GO" id="GO:0003677">
    <property type="term" value="F:DNA binding"/>
    <property type="evidence" value="ECO:0007669"/>
    <property type="project" value="UniProtKB-KW"/>
</dbReference>
<dbReference type="GO" id="GO:0016987">
    <property type="term" value="F:sigma factor activity"/>
    <property type="evidence" value="ECO:0007669"/>
    <property type="project" value="UniProtKB-KW"/>
</dbReference>
<dbReference type="GO" id="GO:0006352">
    <property type="term" value="P:DNA-templated transcription initiation"/>
    <property type="evidence" value="ECO:0007669"/>
    <property type="project" value="InterPro"/>
</dbReference>
<dbReference type="GO" id="GO:0052040">
    <property type="term" value="P:symbiont-mediated perturbation of host programmed cell death"/>
    <property type="evidence" value="ECO:0007669"/>
    <property type="project" value="UniProtKB-KW"/>
</dbReference>
<dbReference type="CDD" id="cd06171">
    <property type="entry name" value="Sigma70_r4"/>
    <property type="match status" value="1"/>
</dbReference>
<dbReference type="FunFam" id="1.10.1740.10:FF:000012">
    <property type="entry name" value="RNA polymerase sigma factor"/>
    <property type="match status" value="1"/>
</dbReference>
<dbReference type="Gene3D" id="1.10.1740.10">
    <property type="match status" value="1"/>
</dbReference>
<dbReference type="Gene3D" id="1.10.10.10">
    <property type="entry name" value="Winged helix-like DNA-binding domain superfamily/Winged helix DNA-binding domain"/>
    <property type="match status" value="1"/>
</dbReference>
<dbReference type="InterPro" id="IPR039425">
    <property type="entry name" value="RNA_pol_sigma-70-like"/>
</dbReference>
<dbReference type="InterPro" id="IPR014284">
    <property type="entry name" value="RNA_pol_sigma-70_dom"/>
</dbReference>
<dbReference type="InterPro" id="IPR000838">
    <property type="entry name" value="RNA_pol_sigma70_ECF_CS"/>
</dbReference>
<dbReference type="InterPro" id="IPR007627">
    <property type="entry name" value="RNA_pol_sigma70_r2"/>
</dbReference>
<dbReference type="InterPro" id="IPR007630">
    <property type="entry name" value="RNA_pol_sigma70_r4"/>
</dbReference>
<dbReference type="InterPro" id="IPR013325">
    <property type="entry name" value="RNA_pol_sigma_r2"/>
</dbReference>
<dbReference type="InterPro" id="IPR013324">
    <property type="entry name" value="RNA_pol_sigma_r3/r4-like"/>
</dbReference>
<dbReference type="InterPro" id="IPR036388">
    <property type="entry name" value="WH-like_DNA-bd_sf"/>
</dbReference>
<dbReference type="NCBIfam" id="TIGR02937">
    <property type="entry name" value="sigma70-ECF"/>
    <property type="match status" value="1"/>
</dbReference>
<dbReference type="PANTHER" id="PTHR43133">
    <property type="entry name" value="RNA POLYMERASE ECF-TYPE SIGMA FACTO"/>
    <property type="match status" value="1"/>
</dbReference>
<dbReference type="PANTHER" id="PTHR43133:SF8">
    <property type="entry name" value="RNA POLYMERASE SIGMA FACTOR HI_1459-RELATED"/>
    <property type="match status" value="1"/>
</dbReference>
<dbReference type="Pfam" id="PF04542">
    <property type="entry name" value="Sigma70_r2"/>
    <property type="match status" value="1"/>
</dbReference>
<dbReference type="Pfam" id="PF04545">
    <property type="entry name" value="Sigma70_r4"/>
    <property type="match status" value="1"/>
</dbReference>
<dbReference type="SUPFAM" id="SSF88946">
    <property type="entry name" value="Sigma2 domain of RNA polymerase sigma factors"/>
    <property type="match status" value="1"/>
</dbReference>
<dbReference type="SUPFAM" id="SSF88659">
    <property type="entry name" value="Sigma3 and sigma4 domains of RNA polymerase sigma factors"/>
    <property type="match status" value="1"/>
</dbReference>
<dbReference type="PROSITE" id="PS01063">
    <property type="entry name" value="SIGMA70_ECF"/>
    <property type="match status" value="1"/>
</dbReference>
<sequence length="184" mass="21237">MLPNLVILDVTEPRKPSSSAGIRQLTADQIQMLRAFIQKRVKNADDVDDILQCVFLEALRNEHKFQHASKPQTWLCGIALNLIRNHFRKMYRQPYQESWEDDVHTDLEWHGDITHQVDGHRQLARVIEAIDCLPTNMQKVLEVSLEMDGNYQETANTLGVPIGTVRSRLSRARVQLKQQIDPFA</sequence>
<proteinExistence type="inferred from homology"/>
<comment type="function">
    <text>Sigma factors are initiation factors that promote the attachment of RNA polymerase to specific initiation sites and are then released. This sigma factor is involved in the activation of hprD as well as other hrp loci which are involved in plant pathogenicity, hrmA and avr genes.</text>
</comment>
<comment type="similarity">
    <text evidence="2">Belongs to the sigma-70 factor family. ECF subfamily.</text>
</comment>
<protein>
    <recommendedName>
        <fullName>RNA polymerase sigma factor HrpL</fullName>
    </recommendedName>
</protein>
<keyword id="KW-0238">DNA-binding</keyword>
<keyword id="KW-0928">Hypersensitive response elicitation</keyword>
<keyword id="KW-0731">Sigma factor</keyword>
<keyword id="KW-0804">Transcription</keyword>
<keyword id="KW-0805">Transcription regulation</keyword>
<gene>
    <name type="primary">hrpL</name>
</gene>
<reference key="1">
    <citation type="journal article" date="1994" name="J. Bacteriol.">
        <title>Identification of a putative alternate sigma factor and characterization of a multicomponent regulatory cascade controlling the expression of Pseudomonas syringae pv. syringae Pss61 hrp and hrmA genes.</title>
        <authorList>
            <person name="Xiao Y."/>
            <person name="Heu S."/>
            <person name="Yi J."/>
            <person name="Lu Y."/>
            <person name="Hutcheson S.W."/>
        </authorList>
    </citation>
    <scope>NUCLEOTIDE SEQUENCE [GENOMIC DNA]</scope>
    <source>
        <strain>Pss61</strain>
    </source>
</reference>
<evidence type="ECO:0000250" key="1"/>
<evidence type="ECO:0000305" key="2"/>
<feature type="chain" id="PRO_0000094012" description="RNA polymerase sigma factor HrpL">
    <location>
        <begin position="1"/>
        <end position="184"/>
    </location>
</feature>
<feature type="DNA-binding region" description="H-T-H motif" evidence="1">
    <location>
        <begin position="151"/>
        <end position="170"/>
    </location>
</feature>
<feature type="short sequence motif" description="Polymerase core binding">
    <location>
        <begin position="49"/>
        <end position="62"/>
    </location>
</feature>
<accession>P37929</accession>
<name>HRPL_PSESY</name>